<accession>A7X781</accession>
<keyword id="KW-0560">Oxidoreductase</keyword>
<keyword id="KW-0819">tRNA processing</keyword>
<name>TRHO_STAA1</name>
<dbReference type="EC" id="1.14.-.-" evidence="1"/>
<dbReference type="EMBL" id="AP009324">
    <property type="protein sequence ID" value="BAF79556.1"/>
    <property type="molecule type" value="Genomic_DNA"/>
</dbReference>
<dbReference type="RefSeq" id="WP_001109281.1">
    <property type="nucleotide sequence ID" value="NC_009782.1"/>
</dbReference>
<dbReference type="SMR" id="A7X781"/>
<dbReference type="KEGG" id="saw:SAHV_2673"/>
<dbReference type="HOGENOM" id="CLU_038878_1_0_9"/>
<dbReference type="GO" id="GO:0016705">
    <property type="term" value="F:oxidoreductase activity, acting on paired donors, with incorporation or reduction of molecular oxygen"/>
    <property type="evidence" value="ECO:0007669"/>
    <property type="project" value="UniProtKB-UniRule"/>
</dbReference>
<dbReference type="GO" id="GO:0006400">
    <property type="term" value="P:tRNA modification"/>
    <property type="evidence" value="ECO:0007669"/>
    <property type="project" value="UniProtKB-UniRule"/>
</dbReference>
<dbReference type="CDD" id="cd01518">
    <property type="entry name" value="RHOD_YceA"/>
    <property type="match status" value="1"/>
</dbReference>
<dbReference type="Gene3D" id="3.30.70.100">
    <property type="match status" value="1"/>
</dbReference>
<dbReference type="Gene3D" id="3.40.250.10">
    <property type="entry name" value="Rhodanese-like domain"/>
    <property type="match status" value="1"/>
</dbReference>
<dbReference type="HAMAP" id="MF_00469">
    <property type="entry name" value="TrhO"/>
    <property type="match status" value="1"/>
</dbReference>
<dbReference type="InterPro" id="IPR001763">
    <property type="entry name" value="Rhodanese-like_dom"/>
</dbReference>
<dbReference type="InterPro" id="IPR036873">
    <property type="entry name" value="Rhodanese-like_dom_sf"/>
</dbReference>
<dbReference type="InterPro" id="IPR022111">
    <property type="entry name" value="Rhodanese_C"/>
</dbReference>
<dbReference type="InterPro" id="IPR020936">
    <property type="entry name" value="TrhO"/>
</dbReference>
<dbReference type="InterPro" id="IPR040503">
    <property type="entry name" value="TRHO_N"/>
</dbReference>
<dbReference type="NCBIfam" id="NF001135">
    <property type="entry name" value="PRK00142.1-3"/>
    <property type="match status" value="1"/>
</dbReference>
<dbReference type="PANTHER" id="PTHR43268:SF3">
    <property type="entry name" value="RHODANESE-LIKE DOMAIN-CONTAINING PROTEIN 7-RELATED"/>
    <property type="match status" value="1"/>
</dbReference>
<dbReference type="PANTHER" id="PTHR43268">
    <property type="entry name" value="THIOSULFATE SULFURTRANSFERASE/RHODANESE-LIKE DOMAIN-CONTAINING PROTEIN 2"/>
    <property type="match status" value="1"/>
</dbReference>
<dbReference type="Pfam" id="PF00581">
    <property type="entry name" value="Rhodanese"/>
    <property type="match status" value="1"/>
</dbReference>
<dbReference type="Pfam" id="PF12368">
    <property type="entry name" value="Rhodanese_C"/>
    <property type="match status" value="1"/>
</dbReference>
<dbReference type="Pfam" id="PF17773">
    <property type="entry name" value="UPF0176_N"/>
    <property type="match status" value="1"/>
</dbReference>
<dbReference type="SMART" id="SM00450">
    <property type="entry name" value="RHOD"/>
    <property type="match status" value="1"/>
</dbReference>
<dbReference type="SUPFAM" id="SSF52821">
    <property type="entry name" value="Rhodanese/Cell cycle control phosphatase"/>
    <property type="match status" value="1"/>
</dbReference>
<dbReference type="PROSITE" id="PS50206">
    <property type="entry name" value="RHODANESE_3"/>
    <property type="match status" value="1"/>
</dbReference>
<comment type="function">
    <text evidence="1">Catalyzes oxygen-dependent 5-hydroxyuridine (ho5U) modification at position 34 in tRNAs.</text>
</comment>
<comment type="catalytic activity">
    <reaction evidence="1">
        <text>uridine(34) in tRNA + AH2 + O2 = 5-hydroxyuridine(34) in tRNA + A + H2O</text>
        <dbReference type="Rhea" id="RHEA:64224"/>
        <dbReference type="Rhea" id="RHEA-COMP:11727"/>
        <dbReference type="Rhea" id="RHEA-COMP:13381"/>
        <dbReference type="ChEBI" id="CHEBI:13193"/>
        <dbReference type="ChEBI" id="CHEBI:15377"/>
        <dbReference type="ChEBI" id="CHEBI:15379"/>
        <dbReference type="ChEBI" id="CHEBI:17499"/>
        <dbReference type="ChEBI" id="CHEBI:65315"/>
        <dbReference type="ChEBI" id="CHEBI:136877"/>
    </reaction>
</comment>
<comment type="similarity">
    <text evidence="1">Belongs to the TrhO family.</text>
</comment>
<protein>
    <recommendedName>
        <fullName evidence="1">tRNA uridine(34) hydroxylase</fullName>
        <ecNumber evidence="1">1.14.-.-</ecNumber>
    </recommendedName>
    <alternativeName>
        <fullName evidence="1">tRNA hydroxylation protein O</fullName>
    </alternativeName>
</protein>
<sequence length="318" mass="37057">MNYQVLLYYKYTTIDDPEQFAQDHLAFCKAHHLKGRILVSTEGINGTLSGTKEETEQYMAHMHADERFKDMVFKIDEAEGHAFKKMHVRPRKEIVALDLEDDVDPRHTTGQYLSPVEFRKALEDDDTVIIDARNDYEFDLGHFRGAIRPDITRFRDLPDWIKENKALFTDKKVVTYCTGGIRCEKFSGWLLKEGFEDVAQLHGGIATYGKDPETKGQYWDGKMYVFDDRISVDINQVEKTIIGKDWFDGKPCERYINCANPECNKQILVSEENETKYLGACSYECAKHERNRYVQANNISDNEWQQRLTNFDDLHQHA</sequence>
<feature type="chain" id="PRO_1000013781" description="tRNA uridine(34) hydroxylase">
    <location>
        <begin position="1"/>
        <end position="318"/>
    </location>
</feature>
<feature type="domain" description="Rhodanese" evidence="1">
    <location>
        <begin position="123"/>
        <end position="217"/>
    </location>
</feature>
<feature type="active site" description="Cysteine persulfide intermediate" evidence="1">
    <location>
        <position position="177"/>
    </location>
</feature>
<organism>
    <name type="scientific">Staphylococcus aureus (strain Mu3 / ATCC 700698)</name>
    <dbReference type="NCBI Taxonomy" id="418127"/>
    <lineage>
        <taxon>Bacteria</taxon>
        <taxon>Bacillati</taxon>
        <taxon>Bacillota</taxon>
        <taxon>Bacilli</taxon>
        <taxon>Bacillales</taxon>
        <taxon>Staphylococcaceae</taxon>
        <taxon>Staphylococcus</taxon>
    </lineage>
</organism>
<evidence type="ECO:0000255" key="1">
    <source>
        <dbReference type="HAMAP-Rule" id="MF_00469"/>
    </source>
</evidence>
<reference key="1">
    <citation type="journal article" date="2008" name="Antimicrob. Agents Chemother.">
        <title>Mutated response regulator graR is responsible for phenotypic conversion of Staphylococcus aureus from heterogeneous vancomycin-intermediate resistance to vancomycin-intermediate resistance.</title>
        <authorList>
            <person name="Neoh H.-M."/>
            <person name="Cui L."/>
            <person name="Yuzawa H."/>
            <person name="Takeuchi F."/>
            <person name="Matsuo M."/>
            <person name="Hiramatsu K."/>
        </authorList>
    </citation>
    <scope>NUCLEOTIDE SEQUENCE [LARGE SCALE GENOMIC DNA]</scope>
    <source>
        <strain>Mu3 / ATCC 700698</strain>
    </source>
</reference>
<gene>
    <name evidence="1" type="primary">trhO</name>
    <name type="ordered locus">SAHV_2673</name>
</gene>
<proteinExistence type="inferred from homology"/>